<comment type="function">
    <text evidence="1">Catalyzes the GTP-dependent phosphorylation of the 3'-hydroxyl group of dephosphocoenzyme A to form coenzyme A (CoA).</text>
</comment>
<comment type="catalytic activity">
    <reaction evidence="1">
        <text>3'-dephospho-CoA + GTP = GDP + CoA + H(+)</text>
        <dbReference type="Rhea" id="RHEA:61156"/>
        <dbReference type="ChEBI" id="CHEBI:15378"/>
        <dbReference type="ChEBI" id="CHEBI:37565"/>
        <dbReference type="ChEBI" id="CHEBI:57287"/>
        <dbReference type="ChEBI" id="CHEBI:57328"/>
        <dbReference type="ChEBI" id="CHEBI:58189"/>
        <dbReference type="EC" id="2.7.1.237"/>
    </reaction>
</comment>
<comment type="pathway">
    <text evidence="1">Cofactor biosynthesis; coenzyme A biosynthesis.</text>
</comment>
<comment type="similarity">
    <text evidence="1">Belongs to the GTP-dependent DPCK family.</text>
</comment>
<evidence type="ECO:0000255" key="1">
    <source>
        <dbReference type="HAMAP-Rule" id="MF_00590"/>
    </source>
</evidence>
<sequence length="169" mass="19037">MLTLPKYLRSELKKPLGQLYKSIDIIEEKLHQQLSEDKLIISIGDATTKNLIKLNIQPQICIVDNKIEREPVEHKLTHTDNLVHVNNPAGCITDELVKICIDSINTATSNNPVIIEVKGEEDLAVLPCILNAPKDTFILYGQPKEGVVLVCVNEAFNKAKHFYKQLNKE</sequence>
<accession>Q2NGN3</accession>
<proteinExistence type="inferred from homology"/>
<keyword id="KW-0173">Coenzyme A biosynthesis</keyword>
<keyword id="KW-0342">GTP-binding</keyword>
<keyword id="KW-0418">Kinase</keyword>
<keyword id="KW-0547">Nucleotide-binding</keyword>
<keyword id="KW-1185">Reference proteome</keyword>
<keyword id="KW-0808">Transferase</keyword>
<feature type="chain" id="PRO_0000380061" description="GTP-dependent dephospho-CoA kinase">
    <location>
        <begin position="1"/>
        <end position="169"/>
    </location>
</feature>
<feature type="binding site" evidence="1">
    <location>
        <position position="45"/>
    </location>
    <ligand>
        <name>GTP</name>
        <dbReference type="ChEBI" id="CHEBI:37565"/>
    </ligand>
</feature>
<feature type="binding site" evidence="1">
    <location>
        <position position="64"/>
    </location>
    <ligand>
        <name>GTP</name>
        <dbReference type="ChEBI" id="CHEBI:37565"/>
    </ligand>
</feature>
<feature type="binding site" evidence="1">
    <location>
        <position position="66"/>
    </location>
    <ligand>
        <name>GTP</name>
        <dbReference type="ChEBI" id="CHEBI:37565"/>
    </ligand>
</feature>
<feature type="binding site" evidence="1">
    <location>
        <position position="121"/>
    </location>
    <ligand>
        <name>GTP</name>
        <dbReference type="ChEBI" id="CHEBI:37565"/>
    </ligand>
</feature>
<gene>
    <name type="ordered locus">Msp_0622</name>
</gene>
<protein>
    <recommendedName>
        <fullName evidence="1">GTP-dependent dephospho-CoA kinase</fullName>
        <ecNumber evidence="1">2.7.1.237</ecNumber>
    </recommendedName>
    <alternativeName>
        <fullName evidence="1">Dephospho-coenzyme A kinase</fullName>
        <shortName evidence="1">DPCK</shortName>
    </alternativeName>
</protein>
<name>DPCKG_METST</name>
<organism>
    <name type="scientific">Methanosphaera stadtmanae (strain ATCC 43021 / DSM 3091 / JCM 11832 / MCB-3)</name>
    <dbReference type="NCBI Taxonomy" id="339860"/>
    <lineage>
        <taxon>Archaea</taxon>
        <taxon>Methanobacteriati</taxon>
        <taxon>Methanobacteriota</taxon>
        <taxon>Methanomada group</taxon>
        <taxon>Methanobacteria</taxon>
        <taxon>Methanobacteriales</taxon>
        <taxon>Methanobacteriaceae</taxon>
        <taxon>Methanosphaera</taxon>
    </lineage>
</organism>
<dbReference type="EC" id="2.7.1.237" evidence="1"/>
<dbReference type="EMBL" id="CP000102">
    <property type="protein sequence ID" value="ABC57020.1"/>
    <property type="molecule type" value="Genomic_DNA"/>
</dbReference>
<dbReference type="RefSeq" id="WP_011406220.1">
    <property type="nucleotide sequence ID" value="NC_007681.1"/>
</dbReference>
<dbReference type="SMR" id="Q2NGN3"/>
<dbReference type="STRING" id="339860.Msp_0622"/>
<dbReference type="KEGG" id="mst:Msp_0622"/>
<dbReference type="eggNOG" id="arCOG04076">
    <property type="taxonomic scope" value="Archaea"/>
</dbReference>
<dbReference type="HOGENOM" id="CLU_120795_1_0_2"/>
<dbReference type="OrthoDB" id="15447at2157"/>
<dbReference type="UniPathway" id="UPA00241"/>
<dbReference type="Proteomes" id="UP000001931">
    <property type="component" value="Chromosome"/>
</dbReference>
<dbReference type="GO" id="GO:0005525">
    <property type="term" value="F:GTP binding"/>
    <property type="evidence" value="ECO:0007669"/>
    <property type="project" value="UniProtKB-UniRule"/>
</dbReference>
<dbReference type="GO" id="GO:0016301">
    <property type="term" value="F:kinase activity"/>
    <property type="evidence" value="ECO:0007669"/>
    <property type="project" value="UniProtKB-UniRule"/>
</dbReference>
<dbReference type="GO" id="GO:0015937">
    <property type="term" value="P:coenzyme A biosynthetic process"/>
    <property type="evidence" value="ECO:0007669"/>
    <property type="project" value="UniProtKB-UniRule"/>
</dbReference>
<dbReference type="HAMAP" id="MF_00590">
    <property type="entry name" value="Dephospho_CoA_kinase_GTP_dep"/>
    <property type="match status" value="1"/>
</dbReference>
<dbReference type="InterPro" id="IPR007164">
    <property type="entry name" value="GTP-dep_dephospho-CoA_kin"/>
</dbReference>
<dbReference type="PANTHER" id="PTHR40732:SF1">
    <property type="entry name" value="GTP-DEPENDENT DEPHOSPHO-COA KINASE"/>
    <property type="match status" value="1"/>
</dbReference>
<dbReference type="PANTHER" id="PTHR40732">
    <property type="entry name" value="UPF0218 PROTEIN TK1697"/>
    <property type="match status" value="1"/>
</dbReference>
<dbReference type="Pfam" id="PF04019">
    <property type="entry name" value="DUF359"/>
    <property type="match status" value="1"/>
</dbReference>
<dbReference type="PIRSF" id="PIRSF006533">
    <property type="entry name" value="UCP006533"/>
    <property type="match status" value="1"/>
</dbReference>
<reference key="1">
    <citation type="journal article" date="2006" name="J. Bacteriol.">
        <title>The genome sequence of Methanosphaera stadtmanae reveals why this human intestinal archaeon is restricted to methanol and H2 for methane formation and ATP synthesis.</title>
        <authorList>
            <person name="Fricke W.F."/>
            <person name="Seedorf H."/>
            <person name="Henne A."/>
            <person name="Kruer M."/>
            <person name="Liesegang H."/>
            <person name="Hedderich R."/>
            <person name="Gottschalk G."/>
            <person name="Thauer R.K."/>
        </authorList>
    </citation>
    <scope>NUCLEOTIDE SEQUENCE [LARGE SCALE GENOMIC DNA]</scope>
    <source>
        <strain>ATCC 43021 / DSM 3091 / JCM 11832 / MCB-3</strain>
    </source>
</reference>